<proteinExistence type="evidence at protein level"/>
<accession>Q9H6D7</accession>
<accession>B7WP17</accession>
<accession>D3DS34</accession>
<accession>Q86T15</accession>
<accession>Q86T16</accession>
<accession>Q86U43</accession>
<accession>Q9NX59</accession>
<protein>
    <recommendedName>
        <fullName>HAUS augmin-like complex subunit 4</fullName>
    </recommendedName>
</protein>
<evidence type="ECO:0000269" key="1">
    <source>
    </source>
</evidence>
<evidence type="ECO:0000269" key="2">
    <source>
    </source>
</evidence>
<evidence type="ECO:0000269" key="3">
    <source>
    </source>
</evidence>
<evidence type="ECO:0000269" key="4">
    <source>
    </source>
</evidence>
<evidence type="ECO:0000303" key="5">
    <source ref="2"/>
</evidence>
<evidence type="ECO:0000305" key="6"/>
<feature type="chain" id="PRO_0000089901" description="HAUS augmin-like complex subunit 4">
    <location>
        <begin position="1"/>
        <end position="363"/>
    </location>
</feature>
<feature type="splice variant" id="VSP_007851" description="In isoform 3." evidence="5">
    <location>
        <begin position="1"/>
        <end position="124"/>
    </location>
</feature>
<feature type="splice variant" id="VSP_007853" description="In isoform 2." evidence="5">
    <location>
        <begin position="111"/>
        <end position="236"/>
    </location>
</feature>
<feature type="splice variant" id="VSP_007852" description="In isoform 4." evidence="5">
    <location>
        <begin position="111"/>
        <end position="155"/>
    </location>
</feature>
<feature type="sequence conflict" description="In Ref. 1; BAA91161." evidence="6" ref="1">
    <original>S</original>
    <variation>T</variation>
    <location>
        <position position="154"/>
    </location>
</feature>
<sequence>MASGDFCSPGEGMEILQQVCSKQLPPCNLSKEDLLQNPYFSKLLLNLSQHVDESGLSLTLAKEQAQAWKEVRLHKTTWLRSEILHRVIQELLVDYYVKIQDTNVTSEDKKFHETLEQRLLVTELMRLLGPSQEREIPPLLGLEKADLLELMPLSEDFVWMRARLQQEVEEQLKKKCFTLLCYYDPNSDADSETVKAAKVWKLAEVLVGEQQQCQDAKSQQKEQMLLLEKKSAAYSQVLLRCLTLLQRLLQEHRLKTQSELDRINAQYLEVKCGAMILKLRMEELKILSDTYTVEKVEVHRLIRDRLEGAIHLQEQDMENSRQVLNSYEVLGEEFDRLVKEYTVLKQATENKRWALQEFSKVYR</sequence>
<gene>
    <name type="primary">HAUS4</name>
    <name type="synonym">C14orf94</name>
</gene>
<name>HAUS4_HUMAN</name>
<dbReference type="EMBL" id="AK026016">
    <property type="protein sequence ID" value="BAB15322.1"/>
    <property type="molecule type" value="mRNA"/>
</dbReference>
<dbReference type="EMBL" id="AK000431">
    <property type="protein sequence ID" value="BAA91161.1"/>
    <property type="molecule type" value="mRNA"/>
</dbReference>
<dbReference type="EMBL" id="BX247981">
    <property type="protein sequence ID" value="CAD62315.1"/>
    <property type="molecule type" value="mRNA"/>
</dbReference>
<dbReference type="EMBL" id="BX247995">
    <property type="protein sequence ID" value="CAD62328.1"/>
    <property type="molecule type" value="mRNA"/>
</dbReference>
<dbReference type="EMBL" id="BX248256">
    <property type="protein sequence ID" value="CAD62584.1"/>
    <property type="status" value="ALT_INIT"/>
    <property type="molecule type" value="mRNA"/>
</dbReference>
<dbReference type="EMBL" id="AL132780">
    <property type="status" value="NOT_ANNOTATED_CDS"/>
    <property type="molecule type" value="Genomic_DNA"/>
</dbReference>
<dbReference type="EMBL" id="CH471078">
    <property type="protein sequence ID" value="EAW66207.1"/>
    <property type="molecule type" value="Genomic_DNA"/>
</dbReference>
<dbReference type="EMBL" id="CH471078">
    <property type="protein sequence ID" value="EAW66206.1"/>
    <property type="molecule type" value="Genomic_DNA"/>
</dbReference>
<dbReference type="EMBL" id="CH471078">
    <property type="protein sequence ID" value="EAW66209.1"/>
    <property type="molecule type" value="Genomic_DNA"/>
</dbReference>
<dbReference type="EMBL" id="CH471078">
    <property type="protein sequence ID" value="EAW66210.1"/>
    <property type="molecule type" value="Genomic_DNA"/>
</dbReference>
<dbReference type="EMBL" id="CH471078">
    <property type="protein sequence ID" value="EAW66213.1"/>
    <property type="molecule type" value="Genomic_DNA"/>
</dbReference>
<dbReference type="EMBL" id="BC001916">
    <property type="protein sequence ID" value="AAH01916.1"/>
    <property type="molecule type" value="mRNA"/>
</dbReference>
<dbReference type="EMBL" id="BC002554">
    <property type="protein sequence ID" value="AAH02554.1"/>
    <property type="molecule type" value="mRNA"/>
</dbReference>
<dbReference type="CCDS" id="CCDS53886.1">
    <molecule id="Q9H6D7-4"/>
</dbReference>
<dbReference type="CCDS" id="CCDS9580.1">
    <molecule id="Q9H6D7-1"/>
</dbReference>
<dbReference type="RefSeq" id="NP_001159741.1">
    <molecule id="Q9H6D7-1"/>
    <property type="nucleotide sequence ID" value="NM_001166269.2"/>
</dbReference>
<dbReference type="RefSeq" id="NP_001159742.1">
    <molecule id="Q9H6D7-4"/>
    <property type="nucleotide sequence ID" value="NM_001166270.2"/>
</dbReference>
<dbReference type="RefSeq" id="NP_060285.2">
    <molecule id="Q9H6D7-1"/>
    <property type="nucleotide sequence ID" value="NM_017815.3"/>
</dbReference>
<dbReference type="PDB" id="7SQK">
    <property type="method" value="EM"/>
    <property type="resolution" value="8.00 A"/>
    <property type="chains" value="D=1-363"/>
</dbReference>
<dbReference type="PDBsum" id="7SQK"/>
<dbReference type="EMDB" id="EMD-25387"/>
<dbReference type="SMR" id="Q9H6D7"/>
<dbReference type="BioGRID" id="120270">
    <property type="interactions" value="118"/>
</dbReference>
<dbReference type="ComplexPortal" id="CPX-1847">
    <property type="entry name" value="HAUS complex"/>
</dbReference>
<dbReference type="CORUM" id="Q9H6D7"/>
<dbReference type="DIP" id="DIP-48837N"/>
<dbReference type="FunCoup" id="Q9H6D7">
    <property type="interactions" value="894"/>
</dbReference>
<dbReference type="IntAct" id="Q9H6D7">
    <property type="interactions" value="71"/>
</dbReference>
<dbReference type="MINT" id="Q9H6D7"/>
<dbReference type="STRING" id="9606.ENSP00000206474"/>
<dbReference type="iPTMnet" id="Q9H6D7"/>
<dbReference type="PhosphoSitePlus" id="Q9H6D7"/>
<dbReference type="BioMuta" id="HAUS4"/>
<dbReference type="DMDM" id="33301114"/>
<dbReference type="jPOST" id="Q9H6D7"/>
<dbReference type="MassIVE" id="Q9H6D7"/>
<dbReference type="PaxDb" id="9606-ENSP00000206474"/>
<dbReference type="PeptideAtlas" id="Q9H6D7"/>
<dbReference type="ProteomicsDB" id="80977">
    <molecule id="Q9H6D7-1"/>
</dbReference>
<dbReference type="ProteomicsDB" id="80978">
    <molecule id="Q9H6D7-2"/>
</dbReference>
<dbReference type="ProteomicsDB" id="80979">
    <molecule id="Q9H6D7-3"/>
</dbReference>
<dbReference type="ProteomicsDB" id="80980">
    <molecule id="Q9H6D7-4"/>
</dbReference>
<dbReference type="Pumba" id="Q9H6D7"/>
<dbReference type="Antibodypedia" id="22337">
    <property type="antibodies" value="117 antibodies from 20 providers"/>
</dbReference>
<dbReference type="DNASU" id="54930"/>
<dbReference type="Ensembl" id="ENST00000206474.11">
    <molecule id="Q9H6D7-1"/>
    <property type="protein sequence ID" value="ENSP00000206474.7"/>
    <property type="gene ID" value="ENSG00000092036.19"/>
</dbReference>
<dbReference type="Ensembl" id="ENST00000342454.12">
    <molecule id="Q9H6D7-4"/>
    <property type="protein sequence ID" value="ENSP00000342776.8"/>
    <property type="gene ID" value="ENSG00000092036.19"/>
</dbReference>
<dbReference type="Ensembl" id="ENST00000347758.6">
    <molecule id="Q9H6D7-2"/>
    <property type="protein sequence ID" value="ENSP00000343473.2"/>
    <property type="gene ID" value="ENSG00000092036.19"/>
</dbReference>
<dbReference type="Ensembl" id="ENST00000490506.5">
    <molecule id="Q9H6D7-3"/>
    <property type="protein sequence ID" value="ENSP00000452260.1"/>
    <property type="gene ID" value="ENSG00000092036.19"/>
</dbReference>
<dbReference type="Ensembl" id="ENST00000541587.6">
    <molecule id="Q9H6D7-1"/>
    <property type="protein sequence ID" value="ENSP00000441026.1"/>
    <property type="gene ID" value="ENSG00000092036.19"/>
</dbReference>
<dbReference type="Ensembl" id="ENST00000555367.5">
    <molecule id="Q9H6D7-4"/>
    <property type="protein sequence ID" value="ENSP00000452239.1"/>
    <property type="gene ID" value="ENSG00000092036.19"/>
</dbReference>
<dbReference type="Ensembl" id="ENST00000555986.5">
    <molecule id="Q9H6D7-4"/>
    <property type="protein sequence ID" value="ENSP00000451018.1"/>
    <property type="gene ID" value="ENSG00000092036.19"/>
</dbReference>
<dbReference type="GeneID" id="54930"/>
<dbReference type="KEGG" id="hsa:54930"/>
<dbReference type="MANE-Select" id="ENST00000541587.6">
    <property type="protein sequence ID" value="ENSP00000441026.1"/>
    <property type="RefSeq nucleotide sequence ID" value="NM_001166269.2"/>
    <property type="RefSeq protein sequence ID" value="NP_001159741.1"/>
</dbReference>
<dbReference type="UCSC" id="uc001whq.4">
    <molecule id="Q9H6D7-1"/>
    <property type="organism name" value="human"/>
</dbReference>
<dbReference type="AGR" id="HGNC:20163"/>
<dbReference type="CTD" id="54930"/>
<dbReference type="DisGeNET" id="54930"/>
<dbReference type="GeneCards" id="HAUS4"/>
<dbReference type="HGNC" id="HGNC:20163">
    <property type="gene designation" value="HAUS4"/>
</dbReference>
<dbReference type="HPA" id="ENSG00000092036">
    <property type="expression patterns" value="Low tissue specificity"/>
</dbReference>
<dbReference type="MIM" id="613431">
    <property type="type" value="gene"/>
</dbReference>
<dbReference type="neXtProt" id="NX_Q9H6D7"/>
<dbReference type="OpenTargets" id="ENSG00000092036"/>
<dbReference type="PharmGKB" id="PA165478984"/>
<dbReference type="VEuPathDB" id="HostDB:ENSG00000092036"/>
<dbReference type="eggNOG" id="ENOG502QW4I">
    <property type="taxonomic scope" value="Eukaryota"/>
</dbReference>
<dbReference type="GeneTree" id="ENSGT00390000014634"/>
<dbReference type="HOGENOM" id="CLU_065166_1_0_1"/>
<dbReference type="InParanoid" id="Q9H6D7"/>
<dbReference type="OMA" id="NWALKEF"/>
<dbReference type="OrthoDB" id="661220at2759"/>
<dbReference type="PAN-GO" id="Q9H6D7">
    <property type="GO annotations" value="4 GO annotations based on evolutionary models"/>
</dbReference>
<dbReference type="PhylomeDB" id="Q9H6D7"/>
<dbReference type="TreeFam" id="TF330353"/>
<dbReference type="PathwayCommons" id="Q9H6D7"/>
<dbReference type="Reactome" id="R-HSA-2565942">
    <property type="pathway name" value="Regulation of PLK1 Activity at G2/M Transition"/>
</dbReference>
<dbReference type="Reactome" id="R-HSA-380259">
    <property type="pathway name" value="Loss of Nlp from mitotic centrosomes"/>
</dbReference>
<dbReference type="Reactome" id="R-HSA-380270">
    <property type="pathway name" value="Recruitment of mitotic centrosome proteins and complexes"/>
</dbReference>
<dbReference type="Reactome" id="R-HSA-380284">
    <property type="pathway name" value="Loss of proteins required for interphase microtubule organization from the centrosome"/>
</dbReference>
<dbReference type="Reactome" id="R-HSA-380320">
    <property type="pathway name" value="Recruitment of NuMA to mitotic centrosomes"/>
</dbReference>
<dbReference type="Reactome" id="R-HSA-5620912">
    <property type="pathway name" value="Anchoring of the basal body to the plasma membrane"/>
</dbReference>
<dbReference type="Reactome" id="R-HSA-8854518">
    <property type="pathway name" value="AURKA Activation by TPX2"/>
</dbReference>
<dbReference type="SignaLink" id="Q9H6D7"/>
<dbReference type="SIGNOR" id="Q9H6D7"/>
<dbReference type="BioGRID-ORCS" id="54930">
    <property type="hits" value="763 hits in 1162 CRISPR screens"/>
</dbReference>
<dbReference type="ChiTaRS" id="HAUS4">
    <property type="organism name" value="human"/>
</dbReference>
<dbReference type="GenomeRNAi" id="54930"/>
<dbReference type="Pharos" id="Q9H6D7">
    <property type="development level" value="Tbio"/>
</dbReference>
<dbReference type="PRO" id="PR:Q9H6D7"/>
<dbReference type="Proteomes" id="UP000005640">
    <property type="component" value="Chromosome 14"/>
</dbReference>
<dbReference type="RNAct" id="Q9H6D7">
    <property type="molecule type" value="protein"/>
</dbReference>
<dbReference type="Bgee" id="ENSG00000092036">
    <property type="expression patterns" value="Expressed in blood and 104 other cell types or tissues"/>
</dbReference>
<dbReference type="ExpressionAtlas" id="Q9H6D7">
    <property type="expression patterns" value="baseline and differential"/>
</dbReference>
<dbReference type="GO" id="GO:0005813">
    <property type="term" value="C:centrosome"/>
    <property type="evidence" value="ECO:0000314"/>
    <property type="project" value="UniProtKB"/>
</dbReference>
<dbReference type="GO" id="GO:0005829">
    <property type="term" value="C:cytosol"/>
    <property type="evidence" value="ECO:0000304"/>
    <property type="project" value="Reactome"/>
</dbReference>
<dbReference type="GO" id="GO:0070652">
    <property type="term" value="C:HAUS complex"/>
    <property type="evidence" value="ECO:0000314"/>
    <property type="project" value="UniProtKB"/>
</dbReference>
<dbReference type="GO" id="GO:1990498">
    <property type="term" value="C:mitotic spindle microtubule"/>
    <property type="evidence" value="ECO:0000314"/>
    <property type="project" value="UniProtKB"/>
</dbReference>
<dbReference type="GO" id="GO:0051011">
    <property type="term" value="F:microtubule minus-end binding"/>
    <property type="evidence" value="ECO:0000318"/>
    <property type="project" value="GO_Central"/>
</dbReference>
<dbReference type="GO" id="GO:0051301">
    <property type="term" value="P:cell division"/>
    <property type="evidence" value="ECO:0007669"/>
    <property type="project" value="UniProtKB-KW"/>
</dbReference>
<dbReference type="GO" id="GO:0007098">
    <property type="term" value="P:centrosome cycle"/>
    <property type="evidence" value="ECO:0000315"/>
    <property type="project" value="UniProtKB"/>
</dbReference>
<dbReference type="GO" id="GO:0010968">
    <property type="term" value="P:regulation of microtubule nucleation"/>
    <property type="evidence" value="ECO:0000303"/>
    <property type="project" value="ComplexPortal"/>
</dbReference>
<dbReference type="GO" id="GO:0051225">
    <property type="term" value="P:spindle assembly"/>
    <property type="evidence" value="ECO:0000315"/>
    <property type="project" value="UniProtKB"/>
</dbReference>
<dbReference type="InterPro" id="IPR029327">
    <property type="entry name" value="HAUS4"/>
</dbReference>
<dbReference type="InterPro" id="IPR026214">
    <property type="entry name" value="HAUS4_met"/>
</dbReference>
<dbReference type="PANTHER" id="PTHR16219">
    <property type="entry name" value="AUGMIN SUBUNIT 4 FAMILY MEMBER"/>
    <property type="match status" value="1"/>
</dbReference>
<dbReference type="PANTHER" id="PTHR16219:SF1">
    <property type="entry name" value="HAUS AUGMIN-LIKE COMPLEX SUBUNIT 4"/>
    <property type="match status" value="1"/>
</dbReference>
<dbReference type="Pfam" id="PF14735">
    <property type="entry name" value="HAUS4"/>
    <property type="match status" value="1"/>
</dbReference>
<dbReference type="PRINTS" id="PR02090">
    <property type="entry name" value="HAUSAUGMINL4"/>
</dbReference>
<comment type="function">
    <text evidence="2 3">Contributes to mitotic spindle assembly, maintenance of centrosome integrity and completion of cytokinesis as part of the HAUS augmin-like complex.</text>
</comment>
<comment type="subunit">
    <text evidence="2 3 4">Component of the HAUS augmin-like complex. The complex interacts with the gamma-tubulin ring complex and this interaction is required for spindle assembly. Interacts with EML3 (phosphorylated at 'Thr-881') (PubMed:30723163).</text>
</comment>
<comment type="interaction">
    <interactant intactId="EBI-2558168">
        <id>Q9H6D7</id>
    </interactant>
    <interactant intactId="EBI-2514791">
        <id>Q96CS2</id>
        <label>HAUS1</label>
    </interactant>
    <organismsDiffer>false</organismsDiffer>
    <experiments>11</experiments>
</comment>
<comment type="interaction">
    <interactant intactId="EBI-2558168">
        <id>Q9H6D7</id>
    </interactant>
    <interactant intactId="EBI-2558196">
        <id>Q7Z4H7</id>
        <label>HAUS6</label>
    </interactant>
    <organismsDiffer>false</organismsDiffer>
    <experiments>3</experiments>
</comment>
<comment type="subcellular location">
    <subcellularLocation>
        <location evidence="1 2 3">Cytoplasm</location>
        <location evidence="1 2 3">Cytoskeleton</location>
        <location evidence="1 2 3">Microtubule organizing center</location>
        <location evidence="1 2 3">Centrosome</location>
    </subcellularLocation>
    <subcellularLocation>
        <location evidence="2 3 4">Cytoplasm</location>
        <location evidence="2 3 4">Cytoskeleton</location>
        <location evidence="2 3 4">Spindle</location>
    </subcellularLocation>
    <text evidence="2 3 4">Localizes to interphase centrosomes and to mitotic spindle microtubules.</text>
</comment>
<comment type="alternative products">
    <event type="alternative splicing"/>
    <isoform>
        <id>Q9H6D7-1</id>
        <name>1</name>
        <sequence type="displayed"/>
    </isoform>
    <isoform>
        <id>Q9H6D7-2</id>
        <name>2</name>
        <sequence type="described" ref="VSP_007853"/>
    </isoform>
    <isoform>
        <id>Q9H6D7-3</id>
        <name>3</name>
        <sequence type="described" ref="VSP_007851"/>
    </isoform>
    <isoform>
        <id>Q9H6D7-4</id>
        <name>4</name>
        <sequence type="described" ref="VSP_007852"/>
    </isoform>
</comment>
<comment type="similarity">
    <text evidence="6">Belongs to the HAUS4 family.</text>
</comment>
<comment type="sequence caution" evidence="6">
    <conflict type="erroneous initiation">
        <sequence resource="EMBL-CDS" id="CAD62584"/>
    </conflict>
    <text>Extended N-terminus.</text>
</comment>
<keyword id="KW-0002">3D-structure</keyword>
<keyword id="KW-0025">Alternative splicing</keyword>
<keyword id="KW-0131">Cell cycle</keyword>
<keyword id="KW-0132">Cell division</keyword>
<keyword id="KW-0963">Cytoplasm</keyword>
<keyword id="KW-0206">Cytoskeleton</keyword>
<keyword id="KW-0493">Microtubule</keyword>
<keyword id="KW-0498">Mitosis</keyword>
<keyword id="KW-1267">Proteomics identification</keyword>
<keyword id="KW-1185">Reference proteome</keyword>
<reference key="1">
    <citation type="journal article" date="2004" name="Nat. Genet.">
        <title>Complete sequencing and characterization of 21,243 full-length human cDNAs.</title>
        <authorList>
            <person name="Ota T."/>
            <person name="Suzuki Y."/>
            <person name="Nishikawa T."/>
            <person name="Otsuki T."/>
            <person name="Sugiyama T."/>
            <person name="Irie R."/>
            <person name="Wakamatsu A."/>
            <person name="Hayashi K."/>
            <person name="Sato H."/>
            <person name="Nagai K."/>
            <person name="Kimura K."/>
            <person name="Makita H."/>
            <person name="Sekine M."/>
            <person name="Obayashi M."/>
            <person name="Nishi T."/>
            <person name="Shibahara T."/>
            <person name="Tanaka T."/>
            <person name="Ishii S."/>
            <person name="Yamamoto J."/>
            <person name="Saito K."/>
            <person name="Kawai Y."/>
            <person name="Isono Y."/>
            <person name="Nakamura Y."/>
            <person name="Nagahari K."/>
            <person name="Murakami K."/>
            <person name="Yasuda T."/>
            <person name="Iwayanagi T."/>
            <person name="Wagatsuma M."/>
            <person name="Shiratori A."/>
            <person name="Sudo H."/>
            <person name="Hosoiri T."/>
            <person name="Kaku Y."/>
            <person name="Kodaira H."/>
            <person name="Kondo H."/>
            <person name="Sugawara M."/>
            <person name="Takahashi M."/>
            <person name="Kanda K."/>
            <person name="Yokoi T."/>
            <person name="Furuya T."/>
            <person name="Kikkawa E."/>
            <person name="Omura Y."/>
            <person name="Abe K."/>
            <person name="Kamihara K."/>
            <person name="Katsuta N."/>
            <person name="Sato K."/>
            <person name="Tanikawa M."/>
            <person name="Yamazaki M."/>
            <person name="Ninomiya K."/>
            <person name="Ishibashi T."/>
            <person name="Yamashita H."/>
            <person name="Murakawa K."/>
            <person name="Fujimori K."/>
            <person name="Tanai H."/>
            <person name="Kimata M."/>
            <person name="Watanabe M."/>
            <person name="Hiraoka S."/>
            <person name="Chiba Y."/>
            <person name="Ishida S."/>
            <person name="Ono Y."/>
            <person name="Takiguchi S."/>
            <person name="Watanabe S."/>
            <person name="Yosida M."/>
            <person name="Hotuta T."/>
            <person name="Kusano J."/>
            <person name="Kanehori K."/>
            <person name="Takahashi-Fujii A."/>
            <person name="Hara H."/>
            <person name="Tanase T.-O."/>
            <person name="Nomura Y."/>
            <person name="Togiya S."/>
            <person name="Komai F."/>
            <person name="Hara R."/>
            <person name="Takeuchi K."/>
            <person name="Arita M."/>
            <person name="Imose N."/>
            <person name="Musashino K."/>
            <person name="Yuuki H."/>
            <person name="Oshima A."/>
            <person name="Sasaki N."/>
            <person name="Aotsuka S."/>
            <person name="Yoshikawa Y."/>
            <person name="Matsunawa H."/>
            <person name="Ichihara T."/>
            <person name="Shiohata N."/>
            <person name="Sano S."/>
            <person name="Moriya S."/>
            <person name="Momiyama H."/>
            <person name="Satoh N."/>
            <person name="Takami S."/>
            <person name="Terashima Y."/>
            <person name="Suzuki O."/>
            <person name="Nakagawa S."/>
            <person name="Senoh A."/>
            <person name="Mizoguchi H."/>
            <person name="Goto Y."/>
            <person name="Shimizu F."/>
            <person name="Wakebe H."/>
            <person name="Hishigaki H."/>
            <person name="Watanabe T."/>
            <person name="Sugiyama A."/>
            <person name="Takemoto M."/>
            <person name="Kawakami B."/>
            <person name="Yamazaki M."/>
            <person name="Watanabe K."/>
            <person name="Kumagai A."/>
            <person name="Itakura S."/>
            <person name="Fukuzumi Y."/>
            <person name="Fujimori Y."/>
            <person name="Komiyama M."/>
            <person name="Tashiro H."/>
            <person name="Tanigami A."/>
            <person name="Fujiwara T."/>
            <person name="Ono T."/>
            <person name="Yamada K."/>
            <person name="Fujii Y."/>
            <person name="Ozaki K."/>
            <person name="Hirao M."/>
            <person name="Ohmori Y."/>
            <person name="Kawabata A."/>
            <person name="Hikiji T."/>
            <person name="Kobatake N."/>
            <person name="Inagaki H."/>
            <person name="Ikema Y."/>
            <person name="Okamoto S."/>
            <person name="Okitani R."/>
            <person name="Kawakami T."/>
            <person name="Noguchi S."/>
            <person name="Itoh T."/>
            <person name="Shigeta K."/>
            <person name="Senba T."/>
            <person name="Matsumura K."/>
            <person name="Nakajima Y."/>
            <person name="Mizuno T."/>
            <person name="Morinaga M."/>
            <person name="Sasaki M."/>
            <person name="Togashi T."/>
            <person name="Oyama M."/>
            <person name="Hata H."/>
            <person name="Watanabe M."/>
            <person name="Komatsu T."/>
            <person name="Mizushima-Sugano J."/>
            <person name="Satoh T."/>
            <person name="Shirai Y."/>
            <person name="Takahashi Y."/>
            <person name="Nakagawa K."/>
            <person name="Okumura K."/>
            <person name="Nagase T."/>
            <person name="Nomura N."/>
            <person name="Kikuchi H."/>
            <person name="Masuho Y."/>
            <person name="Yamashita R."/>
            <person name="Nakai K."/>
            <person name="Yada T."/>
            <person name="Nakamura Y."/>
            <person name="Ohara O."/>
            <person name="Isogai T."/>
            <person name="Sugano S."/>
        </authorList>
    </citation>
    <scope>NUCLEOTIDE SEQUENCE [LARGE SCALE MRNA] (ISOFORM 1)</scope>
    <source>
        <tissue>Kidney epithelium</tissue>
        <tissue>Signet-ring cell carcinoma</tissue>
    </source>
</reference>
<reference key="2">
    <citation type="submission" date="2003-02" db="EMBL/GenBank/DDBJ databases">
        <title>Full-length cDNA libraries and normalization.</title>
        <authorList>
            <person name="Li W.B."/>
            <person name="Gruber C."/>
            <person name="Jessee J."/>
            <person name="Polayes D."/>
        </authorList>
    </citation>
    <scope>NUCLEOTIDE SEQUENCE [LARGE SCALE MRNA] (ISOFORMS 2; 3 AND 4)</scope>
    <source>
        <tissue>Fetal brain</tissue>
        <tissue>T-cell</tissue>
    </source>
</reference>
<reference key="3">
    <citation type="journal article" date="2003" name="Nature">
        <title>The DNA sequence and analysis of human chromosome 14.</title>
        <authorList>
            <person name="Heilig R."/>
            <person name="Eckenberg R."/>
            <person name="Petit J.-L."/>
            <person name="Fonknechten N."/>
            <person name="Da Silva C."/>
            <person name="Cattolico L."/>
            <person name="Levy M."/>
            <person name="Barbe V."/>
            <person name="De Berardinis V."/>
            <person name="Ureta-Vidal A."/>
            <person name="Pelletier E."/>
            <person name="Vico V."/>
            <person name="Anthouard V."/>
            <person name="Rowen L."/>
            <person name="Madan A."/>
            <person name="Qin S."/>
            <person name="Sun H."/>
            <person name="Du H."/>
            <person name="Pepin K."/>
            <person name="Artiguenave F."/>
            <person name="Robert C."/>
            <person name="Cruaud C."/>
            <person name="Bruels T."/>
            <person name="Jaillon O."/>
            <person name="Friedlander L."/>
            <person name="Samson G."/>
            <person name="Brottier P."/>
            <person name="Cure S."/>
            <person name="Segurens B."/>
            <person name="Aniere F."/>
            <person name="Samain S."/>
            <person name="Crespeau H."/>
            <person name="Abbasi N."/>
            <person name="Aiach N."/>
            <person name="Boscus D."/>
            <person name="Dickhoff R."/>
            <person name="Dors M."/>
            <person name="Dubois I."/>
            <person name="Friedman C."/>
            <person name="Gouyvenoux M."/>
            <person name="James R."/>
            <person name="Madan A."/>
            <person name="Mairey-Estrada B."/>
            <person name="Mangenot S."/>
            <person name="Martins N."/>
            <person name="Menard M."/>
            <person name="Oztas S."/>
            <person name="Ratcliffe A."/>
            <person name="Shaffer T."/>
            <person name="Trask B."/>
            <person name="Vacherie B."/>
            <person name="Bellemere C."/>
            <person name="Belser C."/>
            <person name="Besnard-Gonnet M."/>
            <person name="Bartol-Mavel D."/>
            <person name="Boutard M."/>
            <person name="Briez-Silla S."/>
            <person name="Combette S."/>
            <person name="Dufosse-Laurent V."/>
            <person name="Ferron C."/>
            <person name="Lechaplais C."/>
            <person name="Louesse C."/>
            <person name="Muselet D."/>
            <person name="Magdelenat G."/>
            <person name="Pateau E."/>
            <person name="Petit E."/>
            <person name="Sirvain-Trukniewicz P."/>
            <person name="Trybou A."/>
            <person name="Vega-Czarny N."/>
            <person name="Bataille E."/>
            <person name="Bluet E."/>
            <person name="Bordelais I."/>
            <person name="Dubois M."/>
            <person name="Dumont C."/>
            <person name="Guerin T."/>
            <person name="Haffray S."/>
            <person name="Hammadi R."/>
            <person name="Muanga J."/>
            <person name="Pellouin V."/>
            <person name="Robert D."/>
            <person name="Wunderle E."/>
            <person name="Gauguet G."/>
            <person name="Roy A."/>
            <person name="Sainte-Marthe L."/>
            <person name="Verdier J."/>
            <person name="Verdier-Discala C."/>
            <person name="Hillier L.W."/>
            <person name="Fulton L."/>
            <person name="McPherson J."/>
            <person name="Matsuda F."/>
            <person name="Wilson R."/>
            <person name="Scarpelli C."/>
            <person name="Gyapay G."/>
            <person name="Wincker P."/>
            <person name="Saurin W."/>
            <person name="Quetier F."/>
            <person name="Waterston R."/>
            <person name="Hood L."/>
            <person name="Weissenbach J."/>
        </authorList>
    </citation>
    <scope>NUCLEOTIDE SEQUENCE [LARGE SCALE GENOMIC DNA]</scope>
</reference>
<reference key="4">
    <citation type="submission" date="2005-09" db="EMBL/GenBank/DDBJ databases">
        <authorList>
            <person name="Mural R.J."/>
            <person name="Istrail S."/>
            <person name="Sutton G.G."/>
            <person name="Florea L."/>
            <person name="Halpern A.L."/>
            <person name="Mobarry C.M."/>
            <person name="Lippert R."/>
            <person name="Walenz B."/>
            <person name="Shatkay H."/>
            <person name="Dew I."/>
            <person name="Miller J.R."/>
            <person name="Flanigan M.J."/>
            <person name="Edwards N.J."/>
            <person name="Bolanos R."/>
            <person name="Fasulo D."/>
            <person name="Halldorsson B.V."/>
            <person name="Hannenhalli S."/>
            <person name="Turner R."/>
            <person name="Yooseph S."/>
            <person name="Lu F."/>
            <person name="Nusskern D.R."/>
            <person name="Shue B.C."/>
            <person name="Zheng X.H."/>
            <person name="Zhong F."/>
            <person name="Delcher A.L."/>
            <person name="Huson D.H."/>
            <person name="Kravitz S.A."/>
            <person name="Mouchard L."/>
            <person name="Reinert K."/>
            <person name="Remington K.A."/>
            <person name="Clark A.G."/>
            <person name="Waterman M.S."/>
            <person name="Eichler E.E."/>
            <person name="Adams M.D."/>
            <person name="Hunkapiller M.W."/>
            <person name="Myers E.W."/>
            <person name="Venter J.C."/>
        </authorList>
    </citation>
    <scope>NUCLEOTIDE SEQUENCE [LARGE SCALE GENOMIC DNA]</scope>
</reference>
<reference key="5">
    <citation type="journal article" date="2004" name="Genome Res.">
        <title>The status, quality, and expansion of the NIH full-length cDNA project: the Mammalian Gene Collection (MGC).</title>
        <authorList>
            <consortium name="The MGC Project Team"/>
        </authorList>
    </citation>
    <scope>NUCLEOTIDE SEQUENCE [LARGE SCALE MRNA] (ISOFORM 1)</scope>
    <source>
        <tissue>Choriocarcinoma</tissue>
        <tissue>Melanoma</tissue>
    </source>
</reference>
<reference key="6">
    <citation type="journal article" date="2003" name="Nature">
        <title>Proteomic characterization of the human centrosome by protein correlation profiling.</title>
        <authorList>
            <person name="Andersen J.S."/>
            <person name="Wilkinson C.J."/>
            <person name="Mayor T."/>
            <person name="Mortensen P."/>
            <person name="Nigg E.A."/>
            <person name="Mann M."/>
        </authorList>
    </citation>
    <scope>IDENTIFICATION BY MASS SPECTROMETRY</scope>
    <scope>SUBCELLULAR LOCATION [LARGE SCALE ANALYSIS]</scope>
    <source>
        <tissue>Lymphoblast</tissue>
    </source>
</reference>
<reference key="7">
    <citation type="journal article" date="2009" name="Curr. Biol.">
        <title>HAUS, the 8-subunit human augmin complex, regulates centrosome and spindle integrity.</title>
        <authorList>
            <person name="Lawo S."/>
            <person name="Bashkurov M."/>
            <person name="Mullin M."/>
            <person name="Ferreria M.G."/>
            <person name="Kittler R."/>
            <person name="Habermann B."/>
            <person name="Tagliaferro A."/>
            <person name="Poser I."/>
            <person name="Hutchins J.R.A."/>
            <person name="Hegemann B."/>
            <person name="Pinchev D."/>
            <person name="Buchholz F."/>
            <person name="Peters J.-M."/>
            <person name="Hyman A.A."/>
            <person name="Gingras A.-C."/>
            <person name="Pelletier L."/>
        </authorList>
    </citation>
    <scope>IDENTIFICATION IN THE HAUS AUGMIN-LIKE COMPLEX</scope>
    <scope>FUNCTION</scope>
    <scope>SUBCELLULAR LOCATION</scope>
</reference>
<reference key="8">
    <citation type="journal article" date="2009" name="Proc. Natl. Acad. Sci. U.S.A.">
        <title>The augmin complex plays a critical role in spindle microtubule generation for mitotic progression and cytokinesis in human cells.</title>
        <authorList>
            <person name="Uehara R."/>
            <person name="Nozawa R.-S."/>
            <person name="Tomioka A."/>
            <person name="Petry S."/>
            <person name="Vale R.D."/>
            <person name="Obuse C."/>
            <person name="Goshima G."/>
        </authorList>
    </citation>
    <scope>IDENTIFICATION IN THE HAUS AUGMIN-LIKE COMPLEX</scope>
    <scope>FUNCTION</scope>
    <scope>SUBCELLULAR LOCATION</scope>
</reference>
<reference key="9">
    <citation type="journal article" date="2011" name="BMC Syst. Biol.">
        <title>Initial characterization of the human central proteome.</title>
        <authorList>
            <person name="Burkard T.R."/>
            <person name="Planyavsky M."/>
            <person name="Kaupe I."/>
            <person name="Breitwieser F.P."/>
            <person name="Buerckstuemmer T."/>
            <person name="Bennett K.L."/>
            <person name="Superti-Furga G."/>
            <person name="Colinge J."/>
        </authorList>
    </citation>
    <scope>IDENTIFICATION BY MASS SPECTROMETRY [LARGE SCALE ANALYSIS]</scope>
</reference>
<reference key="10">
    <citation type="journal article" date="2019" name="J. Biol. Chem.">
        <title>The microtubule-associated protein EML3 regulates mitotic spindle assembly by recruiting the Augmin complex to spindle microtubules.</title>
        <authorList>
            <person name="Luo J."/>
            <person name="Yang B."/>
            <person name="Xin G."/>
            <person name="Sun M."/>
            <person name="Zhang B."/>
            <person name="Guo X."/>
            <person name="Jiang Q."/>
            <person name="Zhang C."/>
        </authorList>
    </citation>
    <scope>INTERACTION WITH EML3</scope>
    <scope>SUBCELLULAR LOCATION</scope>
</reference>
<organism>
    <name type="scientific">Homo sapiens</name>
    <name type="common">Human</name>
    <dbReference type="NCBI Taxonomy" id="9606"/>
    <lineage>
        <taxon>Eukaryota</taxon>
        <taxon>Metazoa</taxon>
        <taxon>Chordata</taxon>
        <taxon>Craniata</taxon>
        <taxon>Vertebrata</taxon>
        <taxon>Euteleostomi</taxon>
        <taxon>Mammalia</taxon>
        <taxon>Eutheria</taxon>
        <taxon>Euarchontoglires</taxon>
        <taxon>Primates</taxon>
        <taxon>Haplorrhini</taxon>
        <taxon>Catarrhini</taxon>
        <taxon>Hominidae</taxon>
        <taxon>Homo</taxon>
    </lineage>
</organism>